<feature type="chain" id="PRO_0000277003" description="Small ribosomal subunit protein uS3c">
    <location>
        <begin position="1"/>
        <end position="214"/>
    </location>
</feature>
<feature type="domain" description="KH type-2">
    <location>
        <begin position="39"/>
        <end position="111"/>
    </location>
</feature>
<name>RR3_PHATC</name>
<dbReference type="EMBL" id="EF067920">
    <property type="protein sequence ID" value="ABK20683.1"/>
    <property type="molecule type" value="Genomic_DNA"/>
</dbReference>
<dbReference type="RefSeq" id="YP_874460.1">
    <property type="nucleotide sequence ID" value="NC_008588.1"/>
</dbReference>
<dbReference type="SMR" id="A0T0I5"/>
<dbReference type="STRING" id="556484.A0T0I5"/>
<dbReference type="GeneID" id="4524662"/>
<dbReference type="InParanoid" id="A0T0I5"/>
<dbReference type="Proteomes" id="UP000000759">
    <property type="component" value="Chloroplast"/>
</dbReference>
<dbReference type="GO" id="GO:0009507">
    <property type="term" value="C:chloroplast"/>
    <property type="evidence" value="ECO:0007669"/>
    <property type="project" value="UniProtKB-SubCell"/>
</dbReference>
<dbReference type="GO" id="GO:0022627">
    <property type="term" value="C:cytosolic small ribosomal subunit"/>
    <property type="evidence" value="ECO:0007669"/>
    <property type="project" value="TreeGrafter"/>
</dbReference>
<dbReference type="GO" id="GO:0019843">
    <property type="term" value="F:rRNA binding"/>
    <property type="evidence" value="ECO:0007669"/>
    <property type="project" value="UniProtKB-UniRule"/>
</dbReference>
<dbReference type="GO" id="GO:0003735">
    <property type="term" value="F:structural constituent of ribosome"/>
    <property type="evidence" value="ECO:0007669"/>
    <property type="project" value="InterPro"/>
</dbReference>
<dbReference type="GO" id="GO:0006412">
    <property type="term" value="P:translation"/>
    <property type="evidence" value="ECO:0007669"/>
    <property type="project" value="UniProtKB-UniRule"/>
</dbReference>
<dbReference type="CDD" id="cd02412">
    <property type="entry name" value="KH-II_30S_S3"/>
    <property type="match status" value="1"/>
</dbReference>
<dbReference type="FunFam" id="3.30.300.20:FF:000001">
    <property type="entry name" value="30S ribosomal protein S3"/>
    <property type="match status" value="1"/>
</dbReference>
<dbReference type="Gene3D" id="3.30.300.20">
    <property type="match status" value="1"/>
</dbReference>
<dbReference type="Gene3D" id="3.30.1140.32">
    <property type="entry name" value="Ribosomal protein S3, C-terminal domain"/>
    <property type="match status" value="1"/>
</dbReference>
<dbReference type="HAMAP" id="MF_01309_B">
    <property type="entry name" value="Ribosomal_uS3_B"/>
    <property type="match status" value="1"/>
</dbReference>
<dbReference type="InterPro" id="IPR015946">
    <property type="entry name" value="KH_dom-like_a/b"/>
</dbReference>
<dbReference type="InterPro" id="IPR004044">
    <property type="entry name" value="KH_dom_type_2"/>
</dbReference>
<dbReference type="InterPro" id="IPR009019">
    <property type="entry name" value="KH_sf_prok-type"/>
</dbReference>
<dbReference type="InterPro" id="IPR036419">
    <property type="entry name" value="Ribosomal_S3_C_sf"/>
</dbReference>
<dbReference type="InterPro" id="IPR005704">
    <property type="entry name" value="Ribosomal_uS3_bac-typ"/>
</dbReference>
<dbReference type="InterPro" id="IPR001351">
    <property type="entry name" value="Ribosomal_uS3_C"/>
</dbReference>
<dbReference type="InterPro" id="IPR018280">
    <property type="entry name" value="Ribosomal_uS3_CS"/>
</dbReference>
<dbReference type="NCBIfam" id="TIGR01009">
    <property type="entry name" value="rpsC_bact"/>
    <property type="match status" value="1"/>
</dbReference>
<dbReference type="PANTHER" id="PTHR11760">
    <property type="entry name" value="30S/40S RIBOSOMAL PROTEIN S3"/>
    <property type="match status" value="1"/>
</dbReference>
<dbReference type="PANTHER" id="PTHR11760:SF19">
    <property type="entry name" value="SMALL RIBOSOMAL SUBUNIT PROTEIN US3C"/>
    <property type="match status" value="1"/>
</dbReference>
<dbReference type="Pfam" id="PF07650">
    <property type="entry name" value="KH_2"/>
    <property type="match status" value="1"/>
</dbReference>
<dbReference type="Pfam" id="PF00189">
    <property type="entry name" value="Ribosomal_S3_C"/>
    <property type="match status" value="1"/>
</dbReference>
<dbReference type="SUPFAM" id="SSF54814">
    <property type="entry name" value="Prokaryotic type KH domain (KH-domain type II)"/>
    <property type="match status" value="1"/>
</dbReference>
<dbReference type="SUPFAM" id="SSF54821">
    <property type="entry name" value="Ribosomal protein S3 C-terminal domain"/>
    <property type="match status" value="1"/>
</dbReference>
<dbReference type="PROSITE" id="PS50823">
    <property type="entry name" value="KH_TYPE_2"/>
    <property type="match status" value="1"/>
</dbReference>
<dbReference type="PROSITE" id="PS00548">
    <property type="entry name" value="RIBOSOMAL_S3"/>
    <property type="match status" value="1"/>
</dbReference>
<gene>
    <name type="primary">rps3</name>
</gene>
<sequence>MGQKTHPLGFRLGITQEHKSTWYANFNQYANILKEDDKIRTYIHTISKANSIANVRINRNGLNDQIQLNIETGKPGILVGDLGAGLETLLNNVKKFLPANRQLTINVLEVEKVDLDASLLADLVAEQLEKRIAFRRAIREALQRAQKQNVNGIKIQVSGRLNGAEIARSEWIREGRVPLQTLRADIDYATQEANTIYGVLGIKVWLFKSEILSK</sequence>
<protein>
    <recommendedName>
        <fullName evidence="2">Small ribosomal subunit protein uS3c</fullName>
    </recommendedName>
    <alternativeName>
        <fullName>30S ribosomal protein S3, chloroplastic</fullName>
    </alternativeName>
</protein>
<accession>A0T0I5</accession>
<evidence type="ECO:0000250" key="1"/>
<evidence type="ECO:0000305" key="2"/>
<comment type="subunit">
    <text evidence="1">Part of the 30S ribosomal subunit.</text>
</comment>
<comment type="subcellular location">
    <subcellularLocation>
        <location>Plastid</location>
        <location>Chloroplast</location>
    </subcellularLocation>
</comment>
<comment type="similarity">
    <text evidence="2">Belongs to the universal ribosomal protein uS3 family.</text>
</comment>
<organism>
    <name type="scientific">Phaeodactylum tricornutum (strain CCAP 1055/1)</name>
    <dbReference type="NCBI Taxonomy" id="556484"/>
    <lineage>
        <taxon>Eukaryota</taxon>
        <taxon>Sar</taxon>
        <taxon>Stramenopiles</taxon>
        <taxon>Ochrophyta</taxon>
        <taxon>Bacillariophyta</taxon>
        <taxon>Bacillariophyceae</taxon>
        <taxon>Bacillariophycidae</taxon>
        <taxon>Naviculales</taxon>
        <taxon>Phaeodactylaceae</taxon>
        <taxon>Phaeodactylum</taxon>
    </lineage>
</organism>
<proteinExistence type="inferred from homology"/>
<keyword id="KW-0150">Chloroplast</keyword>
<keyword id="KW-0934">Plastid</keyword>
<keyword id="KW-1185">Reference proteome</keyword>
<keyword id="KW-0687">Ribonucleoprotein</keyword>
<keyword id="KW-0689">Ribosomal protein</keyword>
<keyword id="KW-0694">RNA-binding</keyword>
<keyword id="KW-0699">rRNA-binding</keyword>
<reference key="1">
    <citation type="journal article" date="2007" name="Mol. Genet. Genomics">
        <title>Chloroplast genomes of the diatoms Phaeodactylum tricornutum and Thalassiosira pseudonana: comparison with other plastid genomes of the red lineage.</title>
        <authorList>
            <person name="Oudot-Le Secq M.-P."/>
            <person name="Grimwood J."/>
            <person name="Shapiro H."/>
            <person name="Armbrust E.V."/>
            <person name="Bowler C."/>
            <person name="Green B.R."/>
        </authorList>
    </citation>
    <scope>NUCLEOTIDE SEQUENCE [LARGE SCALE GENOMIC DNA]</scope>
    <source>
        <strain>CCAP 1055/1</strain>
    </source>
</reference>
<geneLocation type="chloroplast"/>